<keyword id="KW-0002">3D-structure</keyword>
<keyword id="KW-1043">Host membrane</keyword>
<keyword id="KW-0472">Membrane</keyword>
<keyword id="KW-0614">Plasmid</keyword>
<keyword id="KW-0964">Secreted</keyword>
<keyword id="KW-0812">Transmembrane</keyword>
<keyword id="KW-1133">Transmembrane helix</keyword>
<keyword id="KW-0843">Virulence</keyword>
<geneLocation type="plasmid">
    <name>pYVe227</name>
</geneLocation>
<evidence type="ECO:0000255" key="1"/>
<evidence type="ECO:0000269" key="2">
    <source>
    </source>
</evidence>
<evidence type="ECO:0000269" key="3">
    <source>
    </source>
</evidence>
<evidence type="ECO:0000269" key="4">
    <source>
    </source>
</evidence>
<evidence type="ECO:0000269" key="5">
    <source>
    </source>
</evidence>
<evidence type="ECO:0000269" key="6">
    <source>
    </source>
</evidence>
<evidence type="ECO:0000269" key="7">
    <source>
    </source>
</evidence>
<evidence type="ECO:0000269" key="8">
    <source>
    </source>
</evidence>
<evidence type="ECO:0000303" key="9">
    <source>
    </source>
</evidence>
<evidence type="ECO:0000303" key="10">
    <source>
    </source>
</evidence>
<evidence type="ECO:0000303" key="11">
    <source>
    </source>
</evidence>
<evidence type="ECO:0000305" key="12"/>
<evidence type="ECO:0000305" key="13">
    <source>
    </source>
</evidence>
<evidence type="ECO:0007744" key="14">
    <source>
        <dbReference type="PDB" id="4AM9"/>
    </source>
</evidence>
<name>SCTB_YEREN</name>
<proteinExistence type="evidence at protein level"/>
<sequence length="306" mass="33232">MTINIKTDSPIITTGSQLDAITTETVGQSGEVKKTEDTRHEAQAIKSSEASLSRSQVPELIKPSQGINVALLSKSQGDLNGTLSILLLLLELARKAREMGLQQRDIENKATISAQKEQVAEMVSGAKLMIAMAVVSGIMAATSTVASAFSIAKEVKIVKQEQILNSNIAGRDQLIDTKMQQMSNAGDKAVSREDIGRIWKPEQVADQNKLALLDKEFRMTDSKANAFNAATQPLGQMANSAIQVHQGYSQAEVKEKEVNASIAANEKQKAEEAMNYNDNFMKDVLRLIEQYVSSHTHAMKAAFGVV</sequence>
<organism>
    <name type="scientific">Yersinia enterocolitica</name>
    <dbReference type="NCBI Taxonomy" id="630"/>
    <lineage>
        <taxon>Bacteria</taxon>
        <taxon>Pseudomonadati</taxon>
        <taxon>Pseudomonadota</taxon>
        <taxon>Gammaproteobacteria</taxon>
        <taxon>Enterobacterales</taxon>
        <taxon>Yersiniaceae</taxon>
        <taxon>Yersinia</taxon>
    </lineage>
</organism>
<protein>
    <recommendedName>
        <fullName evidence="12">Type 3 secretion system translocon protein SctB</fullName>
        <shortName evidence="12">T3SS translocon protein SctB</shortName>
    </recommendedName>
    <alternativeName>
        <fullName evidence="9">Translocator YopD</fullName>
    </alternativeName>
    <alternativeName>
        <fullName evidence="11">Yersinia outer protein D</fullName>
    </alternativeName>
</protein>
<accession>P37132</accession>
<gene>
    <name evidence="10" type="primary">sctB</name>
    <name evidence="11" type="synonym">yopD</name>
</gene>
<comment type="function">
    <text evidence="3 4">Component of the type III secretion system (T3SS), also called injectisome, which is used to inject bacterial effector proteins into eukaryotic host cells (PubMed:10476031, PubMed:10581252). YopB/SctE and YopD/SctB are inserted into the host membrane where they form a pore and allow the translocation of effector proteins into the cytosol of target cells (PubMed:10476031, PubMed:10581252).</text>
</comment>
<comment type="function">
    <text evidence="2">Involved in pathogenesis (PubMed:10209737). Essential for the establishment of Yersinia infections in a mouse model system, but not for the targeting of effector Yops (PubMed:10209737). May modulate the host's immune response at a distance from the site of infection (PubMed:10209737).</text>
</comment>
<comment type="subunit">
    <text evidence="3 4 5 6 7 8">The core secretion machinery of the T3SS is composed of approximately 20 different proteins, including cytoplasmic components, a base, an export apparatus and a needle (PubMed:30107569). This subunit is involved in the formation of a pore, called the translocon, in host membrane (PubMed:10476031, PubMed:10581252, PubMed:22001511). Interacts with YopB/SctE and YopE (PubMed:22001511, PubMed:9627954). Together with YopB/SctE, forms a multimeric integral membrane complex with a mass of between 500 and 700 kDa (PubMed:22001511). Interacts with its cognate chaperone SycD (PubMed:22708907).</text>
</comment>
<comment type="subcellular location">
    <subcellularLocation>
        <location evidence="2">Secreted</location>
    </subcellularLocation>
    <subcellularLocation>
        <location evidence="3 5">Host membrane</location>
        <topology evidence="1">Single-pass membrane protein</topology>
    </subcellularLocation>
    <text evidence="5 13">Secreted via the type III secretion system (T3SS) (Probable). After export via the T3SS, YopB/SctE and YopD/SctB form a multimeric integral membrane complex in eukaryotic cell membranes (PubMed:22001511).</text>
</comment>
<comment type="disruption phenotype">
    <text evidence="2">Mutant displays reduced virulence in a mouse model system.</text>
</comment>
<comment type="similarity">
    <text evidence="12">Belongs to the SctB/YopD family.</text>
</comment>
<dbReference type="EMBL" id="AF102990">
    <property type="protein sequence ID" value="AAD16812.1"/>
    <property type="molecule type" value="Genomic_DNA"/>
</dbReference>
<dbReference type="RefSeq" id="NP_052389.1">
    <property type="nucleotide sequence ID" value="NC_002120.1"/>
</dbReference>
<dbReference type="RefSeq" id="WP_010891207.1">
    <property type="nucleotide sequence ID" value="NZ_KN150737.1"/>
</dbReference>
<dbReference type="PDB" id="4AM9">
    <property type="method" value="X-ray"/>
    <property type="resolution" value="2.50 A"/>
    <property type="chains" value="B=56-65"/>
</dbReference>
<dbReference type="PDBsum" id="4AM9"/>
<dbReference type="SMR" id="P37132"/>
<dbReference type="DIP" id="DIP-60761N"/>
<dbReference type="IntAct" id="P37132">
    <property type="interactions" value="1"/>
</dbReference>
<dbReference type="DNASU" id="1239120"/>
<dbReference type="GeneID" id="31412310"/>
<dbReference type="OMA" id="DEMRHGA"/>
<dbReference type="EvolutionaryTrace" id="P37132"/>
<dbReference type="GO" id="GO:0005576">
    <property type="term" value="C:extracellular region"/>
    <property type="evidence" value="ECO:0007669"/>
    <property type="project" value="UniProtKB-SubCell"/>
</dbReference>
<dbReference type="GO" id="GO:0033644">
    <property type="term" value="C:host cell membrane"/>
    <property type="evidence" value="ECO:0007669"/>
    <property type="project" value="UniProtKB-SubCell"/>
</dbReference>
<dbReference type="GO" id="GO:0016020">
    <property type="term" value="C:membrane"/>
    <property type="evidence" value="ECO:0007669"/>
    <property type="project" value="UniProtKB-KW"/>
</dbReference>
<dbReference type="InterPro" id="IPR008898">
    <property type="entry name" value="YopD-like"/>
</dbReference>
<dbReference type="NCBIfam" id="NF038055">
    <property type="entry name" value="T3SS_SctB_pilot"/>
    <property type="match status" value="1"/>
</dbReference>
<dbReference type="Pfam" id="PF05844">
    <property type="entry name" value="YopD"/>
    <property type="match status" value="1"/>
</dbReference>
<feature type="chain" id="PRO_0000066363" description="Type 3 secretion system translocon protein SctB">
    <location>
        <begin position="1"/>
        <end position="306"/>
    </location>
</feature>
<feature type="transmembrane region" description="Helical" evidence="1">
    <location>
        <begin position="128"/>
        <end position="152"/>
    </location>
</feature>
<reference key="1">
    <citation type="journal article" date="1993" name="Infect. Immun.">
        <title>YopB and YopD constitute a novel class of Yersinia Yop proteins.</title>
        <authorList>
            <person name="Haakansson S."/>
            <person name="Bergman T."/>
            <person name="Vanooteghem J.-C."/>
            <person name="Cornelis G."/>
            <person name="Wolf-Watz H."/>
        </authorList>
    </citation>
    <scope>NUCLEOTIDE SEQUENCE [GENOMIC DNA]</scope>
    <source>
        <strain>W22703 / Serotype O:9 / Biotype 2</strain>
    </source>
</reference>
<reference key="2">
    <citation type="journal article" date="1998" name="FEMS Microbiol. Lett.">
        <title>In vitro association between the virulence proteins, YopD and YopE, of Yersinia enterocolitica.</title>
        <authorList>
            <person name="Hartland E.L."/>
            <person name="Robins-Browne R.M."/>
        </authorList>
    </citation>
    <scope>INTERACTION WITH YOPB/SCTE AND YOPE</scope>
    <source>
        <strain>W22703 / Serotype O:9 / Biotype 2</strain>
    </source>
</reference>
<reference key="3">
    <citation type="journal article" date="1999" name="EMBO J.">
        <title>Yersinia enterocolitica type III secretion-translocation system: channel formation by secreted Yops.</title>
        <authorList>
            <person name="Tardy F."/>
            <person name="Homble F."/>
            <person name="Neyt C."/>
            <person name="Wattiez R."/>
            <person name="Cornelis G.R."/>
            <person name="Ruysschaert J.M."/>
            <person name="Cabiaux V."/>
        </authorList>
    </citation>
    <scope>FUNCTION</scope>
    <scope>SUBUNIT</scope>
    <source>
        <strain>E40 / Serotype O:9</strain>
    </source>
</reference>
<reference key="4">
    <citation type="journal article" date="1999" name="Mol. Microbiol.">
        <title>Type III machines of pathogenic yersiniae secrete virulence factors into the extracellular milieu.</title>
        <authorList>
            <person name="Lee V.T."/>
            <person name="Schneewind O."/>
        </authorList>
    </citation>
    <scope>FUNCTION</scope>
    <scope>SUBCELLULAR LOCATION</scope>
    <scope>DISRUPTION PHENOTYPE</scope>
    <source>
        <strain>W22703 / Serotype O:9 / Biotype 2</strain>
    </source>
</reference>
<reference key="5">
    <citation type="journal article" date="1999" name="Mol. Microbiol.">
        <title>Insertion of a Yop translocation pore into the macrophage plasma membrane by Yersinia enterocolitica: requirement for translocators YopB and YopD, but not LcrG.</title>
        <authorList>
            <person name="Neyt C."/>
            <person name="Cornelis G.R."/>
        </authorList>
    </citation>
    <scope>FUNCTION</scope>
    <scope>SUBUNIT</scope>
    <scope>SUBCELLULAR LOCATION</scope>
    <source>
        <strain>E40 / Serotype O:9</strain>
    </source>
</reference>
<reference key="6">
    <citation type="journal article" date="2011" name="J. Bacteriol.">
        <title>Translocators YopB and YopD from Yersinia enterocolitica form a multimeric integral membrane complex in eukaryotic cell membranes.</title>
        <authorList>
            <person name="Montagner C."/>
            <person name="Arquint C."/>
            <person name="Cornelis G.R."/>
        </authorList>
    </citation>
    <scope>SUBUNIT</scope>
    <scope>INTERACTION WITH YOPB/SCTE</scope>
    <scope>SUBCELLULAR LOCATION</scope>
    <source>
        <strain>E40 / Serotype O:9</strain>
    </source>
</reference>
<reference key="7">
    <citation type="journal article" date="2018" name="FEMS Microbiol. Lett.">
        <title>Bacterial type III secretion systems: a complex device for the delivery of bacterial effector proteins into eukaryotic host cells.</title>
        <authorList>
            <person name="Wagner S."/>
            <person name="Grin I."/>
            <person name="Malmsheimer S."/>
            <person name="Singh N."/>
            <person name="Torres-Vargas C.E."/>
            <person name="Westerhausen S."/>
        </authorList>
    </citation>
    <scope>REVIEW</scope>
    <scope>NOMENCLATURE</scope>
    <scope>SUBUNIT</scope>
</reference>
<reference evidence="14" key="8">
    <citation type="journal article" date="2012" name="BMC Struct. Biol.">
        <title>Crystal structure of the Yersinia enterocolitica type III secretion chaperone SycD in complex with a peptide of the minor translocator YopD.</title>
        <authorList>
            <person name="Schreiner M."/>
            <person name="Niemann H.H."/>
        </authorList>
    </citation>
    <scope>X-RAY CRYSTALLOGRAPHY (2.50 ANGSTROMS) OF 56-65 IN COMPLEX WITH THE CHAPERONE SYCD</scope>
    <scope>INTERACTION WITH SYCD</scope>
</reference>